<gene>
    <name type="primary">THEM6</name>
    <name type="synonym">C8orf55</name>
    <name type="ORF">PSEC0098</name>
</gene>
<accession>Q8WUY1</accession>
<accession>B2RDN6</accession>
<accession>Q8NBN2</accession>
<accession>Q9NYI2</accession>
<feature type="signal peptide" evidence="1">
    <location>
        <begin position="1"/>
        <end position="17"/>
    </location>
</feature>
<feature type="chain" id="PRO_0000285636" description="Protein THEM6">
    <location>
        <begin position="18"/>
        <end position="208"/>
    </location>
</feature>
<feature type="modified residue" description="Phosphoserine" evidence="4">
    <location>
        <position position="199"/>
    </location>
</feature>
<feature type="sequence variant" id="VAR_032034" description="In dbSNP:rs17851711." evidence="2">
    <original>E</original>
    <variation>Q</variation>
    <location>
        <position position="93"/>
    </location>
</feature>
<feature type="sequence conflict" description="In Ref. 3; BAC11600." evidence="3" ref="3">
    <original>D</original>
    <variation>G</variation>
    <location>
        <position position="20"/>
    </location>
</feature>
<reference key="1">
    <citation type="submission" date="2000-03" db="EMBL/GenBank/DDBJ databases">
        <title>cDNA DSCD75 expressed by osteogenic human mesenchymal stem cells.</title>
        <authorList>
            <person name="van den Bos C."/>
            <person name="Mbalaviele G."/>
            <person name="Thiede M."/>
        </authorList>
    </citation>
    <scope>NUCLEOTIDE SEQUENCE [MRNA]</scope>
    <source>
        <tissue>Mesenchymal stem cell</tissue>
    </source>
</reference>
<reference key="2">
    <citation type="journal article" date="2004" name="Nat. Genet.">
        <title>Complete sequencing and characterization of 21,243 full-length human cDNAs.</title>
        <authorList>
            <person name="Ota T."/>
            <person name="Suzuki Y."/>
            <person name="Nishikawa T."/>
            <person name="Otsuki T."/>
            <person name="Sugiyama T."/>
            <person name="Irie R."/>
            <person name="Wakamatsu A."/>
            <person name="Hayashi K."/>
            <person name="Sato H."/>
            <person name="Nagai K."/>
            <person name="Kimura K."/>
            <person name="Makita H."/>
            <person name="Sekine M."/>
            <person name="Obayashi M."/>
            <person name="Nishi T."/>
            <person name="Shibahara T."/>
            <person name="Tanaka T."/>
            <person name="Ishii S."/>
            <person name="Yamamoto J."/>
            <person name="Saito K."/>
            <person name="Kawai Y."/>
            <person name="Isono Y."/>
            <person name="Nakamura Y."/>
            <person name="Nagahari K."/>
            <person name="Murakami K."/>
            <person name="Yasuda T."/>
            <person name="Iwayanagi T."/>
            <person name="Wagatsuma M."/>
            <person name="Shiratori A."/>
            <person name="Sudo H."/>
            <person name="Hosoiri T."/>
            <person name="Kaku Y."/>
            <person name="Kodaira H."/>
            <person name="Kondo H."/>
            <person name="Sugawara M."/>
            <person name="Takahashi M."/>
            <person name="Kanda K."/>
            <person name="Yokoi T."/>
            <person name="Furuya T."/>
            <person name="Kikkawa E."/>
            <person name="Omura Y."/>
            <person name="Abe K."/>
            <person name="Kamihara K."/>
            <person name="Katsuta N."/>
            <person name="Sato K."/>
            <person name="Tanikawa M."/>
            <person name="Yamazaki M."/>
            <person name="Ninomiya K."/>
            <person name="Ishibashi T."/>
            <person name="Yamashita H."/>
            <person name="Murakawa K."/>
            <person name="Fujimori K."/>
            <person name="Tanai H."/>
            <person name="Kimata M."/>
            <person name="Watanabe M."/>
            <person name="Hiraoka S."/>
            <person name="Chiba Y."/>
            <person name="Ishida S."/>
            <person name="Ono Y."/>
            <person name="Takiguchi S."/>
            <person name="Watanabe S."/>
            <person name="Yosida M."/>
            <person name="Hotuta T."/>
            <person name="Kusano J."/>
            <person name="Kanehori K."/>
            <person name="Takahashi-Fujii A."/>
            <person name="Hara H."/>
            <person name="Tanase T.-O."/>
            <person name="Nomura Y."/>
            <person name="Togiya S."/>
            <person name="Komai F."/>
            <person name="Hara R."/>
            <person name="Takeuchi K."/>
            <person name="Arita M."/>
            <person name="Imose N."/>
            <person name="Musashino K."/>
            <person name="Yuuki H."/>
            <person name="Oshima A."/>
            <person name="Sasaki N."/>
            <person name="Aotsuka S."/>
            <person name="Yoshikawa Y."/>
            <person name="Matsunawa H."/>
            <person name="Ichihara T."/>
            <person name="Shiohata N."/>
            <person name="Sano S."/>
            <person name="Moriya S."/>
            <person name="Momiyama H."/>
            <person name="Satoh N."/>
            <person name="Takami S."/>
            <person name="Terashima Y."/>
            <person name="Suzuki O."/>
            <person name="Nakagawa S."/>
            <person name="Senoh A."/>
            <person name="Mizoguchi H."/>
            <person name="Goto Y."/>
            <person name="Shimizu F."/>
            <person name="Wakebe H."/>
            <person name="Hishigaki H."/>
            <person name="Watanabe T."/>
            <person name="Sugiyama A."/>
            <person name="Takemoto M."/>
            <person name="Kawakami B."/>
            <person name="Yamazaki M."/>
            <person name="Watanabe K."/>
            <person name="Kumagai A."/>
            <person name="Itakura S."/>
            <person name="Fukuzumi Y."/>
            <person name="Fujimori Y."/>
            <person name="Komiyama M."/>
            <person name="Tashiro H."/>
            <person name="Tanigami A."/>
            <person name="Fujiwara T."/>
            <person name="Ono T."/>
            <person name="Yamada K."/>
            <person name="Fujii Y."/>
            <person name="Ozaki K."/>
            <person name="Hirao M."/>
            <person name="Ohmori Y."/>
            <person name="Kawabata A."/>
            <person name="Hikiji T."/>
            <person name="Kobatake N."/>
            <person name="Inagaki H."/>
            <person name="Ikema Y."/>
            <person name="Okamoto S."/>
            <person name="Okitani R."/>
            <person name="Kawakami T."/>
            <person name="Noguchi S."/>
            <person name="Itoh T."/>
            <person name="Shigeta K."/>
            <person name="Senba T."/>
            <person name="Matsumura K."/>
            <person name="Nakajima Y."/>
            <person name="Mizuno T."/>
            <person name="Morinaga M."/>
            <person name="Sasaki M."/>
            <person name="Togashi T."/>
            <person name="Oyama M."/>
            <person name="Hata H."/>
            <person name="Watanabe M."/>
            <person name="Komatsu T."/>
            <person name="Mizushima-Sugano J."/>
            <person name="Satoh T."/>
            <person name="Shirai Y."/>
            <person name="Takahashi Y."/>
            <person name="Nakagawa K."/>
            <person name="Okumura K."/>
            <person name="Nagase T."/>
            <person name="Nomura N."/>
            <person name="Kikuchi H."/>
            <person name="Masuho Y."/>
            <person name="Yamashita R."/>
            <person name="Nakai K."/>
            <person name="Yada T."/>
            <person name="Nakamura Y."/>
            <person name="Ohara O."/>
            <person name="Isogai T."/>
            <person name="Sugano S."/>
        </authorList>
    </citation>
    <scope>NUCLEOTIDE SEQUENCE [LARGE SCALE MRNA]</scope>
</reference>
<reference key="3">
    <citation type="journal article" date="2005" name="DNA Res.">
        <title>Signal sequence and keyword trap in silico for selection of full-length human cDNAs encoding secretion or membrane proteins from oligo-capped cDNA libraries.</title>
        <authorList>
            <person name="Otsuki T."/>
            <person name="Ota T."/>
            <person name="Nishikawa T."/>
            <person name="Hayashi K."/>
            <person name="Suzuki Y."/>
            <person name="Yamamoto J."/>
            <person name="Wakamatsu A."/>
            <person name="Kimura K."/>
            <person name="Sakamoto K."/>
            <person name="Hatano N."/>
            <person name="Kawai Y."/>
            <person name="Ishii S."/>
            <person name="Saito K."/>
            <person name="Kojima S."/>
            <person name="Sugiyama T."/>
            <person name="Ono T."/>
            <person name="Okano K."/>
            <person name="Yoshikawa Y."/>
            <person name="Aotsuka S."/>
            <person name="Sasaki N."/>
            <person name="Hattori A."/>
            <person name="Okumura K."/>
            <person name="Nagai K."/>
            <person name="Sugano S."/>
            <person name="Isogai T."/>
        </authorList>
    </citation>
    <scope>NUCLEOTIDE SEQUENCE [LARGE SCALE MRNA]</scope>
    <source>
        <tissue>Teratocarcinoma</tissue>
    </source>
</reference>
<reference key="4">
    <citation type="journal article" date="2004" name="Genome Res.">
        <title>The status, quality, and expansion of the NIH full-length cDNA project: the Mammalian Gene Collection (MGC).</title>
        <authorList>
            <consortium name="The MGC Project Team"/>
        </authorList>
    </citation>
    <scope>NUCLEOTIDE SEQUENCE [LARGE SCALE MRNA]</scope>
    <scope>VARIANT GLN-93</scope>
    <source>
        <tissue>Muscle</tissue>
        <tissue>Placenta</tissue>
    </source>
</reference>
<reference key="5">
    <citation type="journal article" date="2011" name="BMC Syst. Biol.">
        <title>Initial characterization of the human central proteome.</title>
        <authorList>
            <person name="Burkard T.R."/>
            <person name="Planyavsky M."/>
            <person name="Kaupe I."/>
            <person name="Breitwieser F.P."/>
            <person name="Buerckstuemmer T."/>
            <person name="Bennett K.L."/>
            <person name="Superti-Furga G."/>
            <person name="Colinge J."/>
        </authorList>
    </citation>
    <scope>IDENTIFICATION BY MASS SPECTROMETRY [LARGE SCALE ANALYSIS]</scope>
</reference>
<reference key="6">
    <citation type="journal article" date="2014" name="J. Proteomics">
        <title>An enzyme assisted RP-RPLC approach for in-depth analysis of human liver phosphoproteome.</title>
        <authorList>
            <person name="Bian Y."/>
            <person name="Song C."/>
            <person name="Cheng K."/>
            <person name="Dong M."/>
            <person name="Wang F."/>
            <person name="Huang J."/>
            <person name="Sun D."/>
            <person name="Wang L."/>
            <person name="Ye M."/>
            <person name="Zou H."/>
        </authorList>
    </citation>
    <scope>PHOSPHORYLATION [LARGE SCALE ANALYSIS] AT SER-199</scope>
    <scope>IDENTIFICATION BY MASS SPECTROMETRY [LARGE SCALE ANALYSIS]</scope>
    <source>
        <tissue>Liver</tissue>
    </source>
</reference>
<reference key="7">
    <citation type="journal article" date="2015" name="Proteomics">
        <title>N-terminome analysis of the human mitochondrial proteome.</title>
        <authorList>
            <person name="Vaca Jacome A.S."/>
            <person name="Rabilloud T."/>
            <person name="Schaeffer-Reiss C."/>
            <person name="Rompais M."/>
            <person name="Ayoub D."/>
            <person name="Lane L."/>
            <person name="Bairoch A."/>
            <person name="Van Dorsselaer A."/>
            <person name="Carapito C."/>
        </authorList>
    </citation>
    <scope>IDENTIFICATION BY MASS SPECTROMETRY [LARGE SCALE ANALYSIS]</scope>
</reference>
<protein>
    <recommendedName>
        <fullName>Protein THEM6</fullName>
    </recommendedName>
    <alternativeName>
        <fullName>Mesenchymal stem cell protein DSCD75</fullName>
    </alternativeName>
    <alternativeName>
        <fullName>Thioesterase superfamily member 6</fullName>
    </alternativeName>
</protein>
<comment type="subcellular location">
    <subcellularLocation>
        <location evidence="3">Secreted</location>
    </subcellularLocation>
</comment>
<comment type="similarity">
    <text evidence="3">Belongs to the THEM6 family.</text>
</comment>
<proteinExistence type="evidence at protein level"/>
<evidence type="ECO:0000255" key="1"/>
<evidence type="ECO:0000269" key="2">
    <source>
    </source>
</evidence>
<evidence type="ECO:0000305" key="3"/>
<evidence type="ECO:0007744" key="4">
    <source>
    </source>
</evidence>
<keyword id="KW-0597">Phosphoprotein</keyword>
<keyword id="KW-1267">Proteomics identification</keyword>
<keyword id="KW-1185">Reference proteome</keyword>
<keyword id="KW-0964">Secreted</keyword>
<keyword id="KW-0732">Signal</keyword>
<dbReference type="EMBL" id="AF242773">
    <property type="protein sequence ID" value="AAF65450.1"/>
    <property type="molecule type" value="mRNA"/>
</dbReference>
<dbReference type="EMBL" id="AK315614">
    <property type="protein sequence ID" value="BAG37983.1"/>
    <property type="molecule type" value="mRNA"/>
</dbReference>
<dbReference type="EMBL" id="AK075407">
    <property type="protein sequence ID" value="BAC11600.1"/>
    <property type="molecule type" value="mRNA"/>
</dbReference>
<dbReference type="EMBL" id="BC001311">
    <property type="protein sequence ID" value="AAH01311.1"/>
    <property type="molecule type" value="mRNA"/>
</dbReference>
<dbReference type="EMBL" id="BC019104">
    <property type="protein sequence ID" value="AAH19104.1"/>
    <property type="molecule type" value="mRNA"/>
</dbReference>
<dbReference type="CCDS" id="CCDS6386.1"/>
<dbReference type="RefSeq" id="NP_057731.1">
    <property type="nucleotide sequence ID" value="NM_016647.3"/>
</dbReference>
<dbReference type="SMR" id="Q8WUY1"/>
<dbReference type="BioGRID" id="119484">
    <property type="interactions" value="155"/>
</dbReference>
<dbReference type="FunCoup" id="Q8WUY1">
    <property type="interactions" value="343"/>
</dbReference>
<dbReference type="IntAct" id="Q8WUY1">
    <property type="interactions" value="64"/>
</dbReference>
<dbReference type="MINT" id="Q8WUY1"/>
<dbReference type="STRING" id="9606.ENSP00000338607"/>
<dbReference type="GlyGen" id="Q8WUY1">
    <property type="glycosylation" value="1 site, 1 O-linked glycan (1 site)"/>
</dbReference>
<dbReference type="iPTMnet" id="Q8WUY1"/>
<dbReference type="PhosphoSitePlus" id="Q8WUY1"/>
<dbReference type="SwissPalm" id="Q8WUY1"/>
<dbReference type="BioMuta" id="THEM6"/>
<dbReference type="DMDM" id="146286068"/>
<dbReference type="jPOST" id="Q8WUY1"/>
<dbReference type="MassIVE" id="Q8WUY1"/>
<dbReference type="PaxDb" id="9606-ENSP00000338607"/>
<dbReference type="PeptideAtlas" id="Q8WUY1"/>
<dbReference type="ProteomicsDB" id="74721"/>
<dbReference type="Pumba" id="Q8WUY1"/>
<dbReference type="Antibodypedia" id="14531">
    <property type="antibodies" value="91 antibodies from 15 providers"/>
</dbReference>
<dbReference type="DNASU" id="51337"/>
<dbReference type="Ensembl" id="ENST00000336138.4">
    <property type="protein sequence ID" value="ENSP00000338607.3"/>
    <property type="gene ID" value="ENSG00000130193.8"/>
</dbReference>
<dbReference type="GeneID" id="51337"/>
<dbReference type="KEGG" id="hsa:51337"/>
<dbReference type="MANE-Select" id="ENST00000336138.4">
    <property type="protein sequence ID" value="ENSP00000338607.3"/>
    <property type="RefSeq nucleotide sequence ID" value="NM_016647.3"/>
    <property type="RefSeq protein sequence ID" value="NP_057731.1"/>
</dbReference>
<dbReference type="UCSC" id="uc003yww.2">
    <property type="organism name" value="human"/>
</dbReference>
<dbReference type="AGR" id="HGNC:29656"/>
<dbReference type="CTD" id="51337"/>
<dbReference type="DisGeNET" id="51337"/>
<dbReference type="GeneCards" id="THEM6"/>
<dbReference type="HGNC" id="HGNC:29656">
    <property type="gene designation" value="THEM6"/>
</dbReference>
<dbReference type="HPA" id="ENSG00000130193">
    <property type="expression patterns" value="Low tissue specificity"/>
</dbReference>
<dbReference type="neXtProt" id="NX_Q8WUY1"/>
<dbReference type="OpenTargets" id="ENSG00000130193"/>
<dbReference type="PharmGKB" id="PA142672318"/>
<dbReference type="VEuPathDB" id="HostDB:ENSG00000130193"/>
<dbReference type="eggNOG" id="KOG4366">
    <property type="taxonomic scope" value="Eukaryota"/>
</dbReference>
<dbReference type="GeneTree" id="ENSGT00390000004859"/>
<dbReference type="HOGENOM" id="CLU_091107_0_1_1"/>
<dbReference type="InParanoid" id="Q8WUY1"/>
<dbReference type="OMA" id="RDIDMCH"/>
<dbReference type="OrthoDB" id="265761at2759"/>
<dbReference type="PAN-GO" id="Q8WUY1">
    <property type="GO annotations" value="0 GO annotations based on evolutionary models"/>
</dbReference>
<dbReference type="PhylomeDB" id="Q8WUY1"/>
<dbReference type="TreeFam" id="TF324625"/>
<dbReference type="PathwayCommons" id="Q8WUY1"/>
<dbReference type="SignaLink" id="Q8WUY1"/>
<dbReference type="BioGRID-ORCS" id="51337">
    <property type="hits" value="10 hits in 1159 CRISPR screens"/>
</dbReference>
<dbReference type="CD-CODE" id="FB4E32DD">
    <property type="entry name" value="Presynaptic clusters and postsynaptic densities"/>
</dbReference>
<dbReference type="ChiTaRS" id="THEM6">
    <property type="organism name" value="human"/>
</dbReference>
<dbReference type="GenomeRNAi" id="51337"/>
<dbReference type="Pharos" id="Q8WUY1">
    <property type="development level" value="Tbio"/>
</dbReference>
<dbReference type="PRO" id="PR:Q8WUY1"/>
<dbReference type="Proteomes" id="UP000005640">
    <property type="component" value="Chromosome 8"/>
</dbReference>
<dbReference type="RNAct" id="Q8WUY1">
    <property type="molecule type" value="protein"/>
</dbReference>
<dbReference type="Bgee" id="ENSG00000130193">
    <property type="expression patterns" value="Expressed in right lobe of liver and 111 other cell types or tissues"/>
</dbReference>
<dbReference type="ExpressionAtlas" id="Q8WUY1">
    <property type="expression patterns" value="baseline and differential"/>
</dbReference>
<dbReference type="GO" id="GO:0005576">
    <property type="term" value="C:extracellular region"/>
    <property type="evidence" value="ECO:0007669"/>
    <property type="project" value="UniProtKB-SubCell"/>
</dbReference>
<dbReference type="CDD" id="cd00586">
    <property type="entry name" value="4HBT"/>
    <property type="match status" value="1"/>
</dbReference>
<dbReference type="Gene3D" id="3.10.129.10">
    <property type="entry name" value="Hotdog Thioesterase"/>
    <property type="match status" value="1"/>
</dbReference>
<dbReference type="InterPro" id="IPR029069">
    <property type="entry name" value="HotDog_dom_sf"/>
</dbReference>
<dbReference type="InterPro" id="IPR051490">
    <property type="entry name" value="THEM6_lcsJ_thioesterase"/>
</dbReference>
<dbReference type="PANTHER" id="PTHR12475">
    <property type="match status" value="1"/>
</dbReference>
<dbReference type="PANTHER" id="PTHR12475:SF4">
    <property type="entry name" value="PROTEIN THEM6"/>
    <property type="match status" value="1"/>
</dbReference>
<dbReference type="Pfam" id="PF13279">
    <property type="entry name" value="4HBT_2"/>
    <property type="match status" value="1"/>
</dbReference>
<dbReference type="SUPFAM" id="SSF54637">
    <property type="entry name" value="Thioesterase/thiol ester dehydrase-isomerase"/>
    <property type="match status" value="1"/>
</dbReference>
<sequence>MLGLLVALLALGLAVFALLDVWYLVRLPCAVLRARLLQPRVRDLLAEQRFPGRVLPSDLDLLLHMNNARYLREADFARVAHLTRCGVLGALRELRAHTVLAASCARHRRSLRLLEPFEVRTRLLGWDDRAFYLEARFVSLRDGFVCALLRFRQHLLGTSPERVVQHLCQRRVEPPELPADLQHWISYNEASSQLLRMESGLSDVTKDQ</sequence>
<name>THEM6_HUMAN</name>
<organism>
    <name type="scientific">Homo sapiens</name>
    <name type="common">Human</name>
    <dbReference type="NCBI Taxonomy" id="9606"/>
    <lineage>
        <taxon>Eukaryota</taxon>
        <taxon>Metazoa</taxon>
        <taxon>Chordata</taxon>
        <taxon>Craniata</taxon>
        <taxon>Vertebrata</taxon>
        <taxon>Euteleostomi</taxon>
        <taxon>Mammalia</taxon>
        <taxon>Eutheria</taxon>
        <taxon>Euarchontoglires</taxon>
        <taxon>Primates</taxon>
        <taxon>Haplorrhini</taxon>
        <taxon>Catarrhini</taxon>
        <taxon>Hominidae</taxon>
        <taxon>Homo</taxon>
    </lineage>
</organism>